<name>RFBB_VIBCH</name>
<reference key="1">
    <citation type="journal article" date="1992" name="Proc. Natl. Acad. Sci. U.S.A.">
        <title>Serotype conversion in Vibrio cholerae O1.</title>
        <authorList>
            <person name="Stroeher U.H."/>
            <person name="Karageorgos L.E."/>
            <person name="Morona R."/>
            <person name="Manning P.A."/>
        </authorList>
    </citation>
    <scope>NUCLEOTIDE SEQUENCE [GENOMIC DNA]</scope>
    <source>
        <strain>El Tor O17 / Serotype O1</strain>
    </source>
</reference>
<reference key="2">
    <citation type="journal article" date="2000" name="Nature">
        <title>DNA sequence of both chromosomes of the cholera pathogen Vibrio cholerae.</title>
        <authorList>
            <person name="Heidelberg J.F."/>
            <person name="Eisen J.A."/>
            <person name="Nelson W.C."/>
            <person name="Clayton R.A."/>
            <person name="Gwinn M.L."/>
            <person name="Dodson R.J."/>
            <person name="Haft D.H."/>
            <person name="Hickey E.K."/>
            <person name="Peterson J.D."/>
            <person name="Umayam L.A."/>
            <person name="Gill S.R."/>
            <person name="Nelson K.E."/>
            <person name="Read T.D."/>
            <person name="Tettelin H."/>
            <person name="Richardson D.L."/>
            <person name="Ermolaeva M.D."/>
            <person name="Vamathevan J.J."/>
            <person name="Bass S."/>
            <person name="Qin H."/>
            <person name="Dragoi I."/>
            <person name="Sellers P."/>
            <person name="McDonald L.A."/>
            <person name="Utterback T.R."/>
            <person name="Fleischmann R.D."/>
            <person name="Nierman W.C."/>
            <person name="White O."/>
            <person name="Salzberg S.L."/>
            <person name="Smith H.O."/>
            <person name="Colwell R.R."/>
            <person name="Mekalanos J.J."/>
            <person name="Venter J.C."/>
            <person name="Fraser C.M."/>
        </authorList>
    </citation>
    <scope>NUCLEOTIDE SEQUENCE [LARGE SCALE GENOMIC DNA]</scope>
    <source>
        <strain>ATCC 39315 / El Tor Inaba N16961</strain>
    </source>
</reference>
<comment type="function">
    <text>Involved in GDP-mannose biosynthesis which serves as the activated sugar nucleotide precursor for mannose residues in cell surface polysaccharides.</text>
</comment>
<comment type="catalytic activity">
    <reaction>
        <text>alpha-D-mannose 1-phosphate = D-mannose 6-phosphate</text>
        <dbReference type="Rhea" id="RHEA:11140"/>
        <dbReference type="ChEBI" id="CHEBI:58409"/>
        <dbReference type="ChEBI" id="CHEBI:58735"/>
        <dbReference type="EC" id="5.4.2.8"/>
    </reaction>
</comment>
<comment type="cofactor">
    <cofactor evidence="1">
        <name>Mg(2+)</name>
        <dbReference type="ChEBI" id="CHEBI:18420"/>
    </cofactor>
    <text evidence="1">Binds 1 Mg(2+) ion per subunit.</text>
</comment>
<comment type="pathway">
    <text>Nucleotide-sugar biosynthesis; GDP-alpha-D-mannose biosynthesis; alpha-D-mannose 1-phosphate from D-fructose 6-phosphate: step 2/2.</text>
</comment>
<comment type="pathway">
    <text>Bacterial outer membrane biogenesis; LPS O-antigen biosynthesis.</text>
</comment>
<comment type="subcellular location">
    <subcellularLocation>
        <location evidence="2">Cell membrane</location>
    </subcellularLocation>
</comment>
<comment type="similarity">
    <text evidence="2">Belongs to the phosphohexose mutase family.</text>
</comment>
<protein>
    <recommendedName>
        <fullName>Phosphomannomutase</fullName>
        <shortName>PMM</shortName>
        <ecNumber>5.4.2.8</ecNumber>
    </recommendedName>
</protein>
<organism>
    <name type="scientific">Vibrio cholerae serotype O1 (strain ATCC 39315 / El Tor Inaba N16961)</name>
    <dbReference type="NCBI Taxonomy" id="243277"/>
    <lineage>
        <taxon>Bacteria</taxon>
        <taxon>Pseudomonadati</taxon>
        <taxon>Pseudomonadota</taxon>
        <taxon>Gammaproteobacteria</taxon>
        <taxon>Vibrionales</taxon>
        <taxon>Vibrionaceae</taxon>
        <taxon>Vibrio</taxon>
    </lineage>
</organism>
<dbReference type="EC" id="5.4.2.8"/>
<dbReference type="EMBL" id="X59554">
    <property type="protein sequence ID" value="CAA42135.1"/>
    <property type="molecule type" value="Genomic_DNA"/>
</dbReference>
<dbReference type="EMBL" id="AE003852">
    <property type="protein sequence ID" value="AAF93418.1"/>
    <property type="molecule type" value="Genomic_DNA"/>
</dbReference>
<dbReference type="PIR" id="S28469">
    <property type="entry name" value="S28469"/>
</dbReference>
<dbReference type="RefSeq" id="NP_229899.1">
    <property type="nucleotide sequence ID" value="NC_002505.1"/>
</dbReference>
<dbReference type="RefSeq" id="WP_000661577.1">
    <property type="nucleotide sequence ID" value="NZ_LT906614.1"/>
</dbReference>
<dbReference type="SMR" id="Q06951"/>
<dbReference type="STRING" id="243277.VC_0242"/>
<dbReference type="DNASU" id="2614705"/>
<dbReference type="EnsemblBacteria" id="AAF93418">
    <property type="protein sequence ID" value="AAF93418"/>
    <property type="gene ID" value="VC_0242"/>
</dbReference>
<dbReference type="KEGG" id="vch:VC_0242"/>
<dbReference type="PATRIC" id="fig|243277.26.peg.223"/>
<dbReference type="eggNOG" id="COG1109">
    <property type="taxonomic scope" value="Bacteria"/>
</dbReference>
<dbReference type="HOGENOM" id="CLU_016950_9_2_6"/>
<dbReference type="UniPathway" id="UPA00126">
    <property type="reaction ID" value="UER00424"/>
</dbReference>
<dbReference type="UniPathway" id="UPA00281"/>
<dbReference type="PHI-base" id="PHI:703"/>
<dbReference type="Proteomes" id="UP000000584">
    <property type="component" value="Chromosome 1"/>
</dbReference>
<dbReference type="GO" id="GO:0005886">
    <property type="term" value="C:plasma membrane"/>
    <property type="evidence" value="ECO:0007669"/>
    <property type="project" value="UniProtKB-SubCell"/>
</dbReference>
<dbReference type="GO" id="GO:0000287">
    <property type="term" value="F:magnesium ion binding"/>
    <property type="evidence" value="ECO:0007669"/>
    <property type="project" value="InterPro"/>
</dbReference>
<dbReference type="GO" id="GO:0004615">
    <property type="term" value="F:phosphomannomutase activity"/>
    <property type="evidence" value="ECO:0007669"/>
    <property type="project" value="UniProtKB-EC"/>
</dbReference>
<dbReference type="GO" id="GO:0009298">
    <property type="term" value="P:GDP-mannose biosynthetic process"/>
    <property type="evidence" value="ECO:0007669"/>
    <property type="project" value="UniProtKB-UniPathway"/>
</dbReference>
<dbReference type="GO" id="GO:0009243">
    <property type="term" value="P:O antigen biosynthetic process"/>
    <property type="evidence" value="ECO:0007669"/>
    <property type="project" value="UniProtKB-UniPathway"/>
</dbReference>
<dbReference type="CDD" id="cd03089">
    <property type="entry name" value="PMM_PGM"/>
    <property type="match status" value="1"/>
</dbReference>
<dbReference type="FunFam" id="3.30.310.50:FF:000016">
    <property type="entry name" value="Phosphomannomutase"/>
    <property type="match status" value="1"/>
</dbReference>
<dbReference type="Gene3D" id="3.40.120.10">
    <property type="entry name" value="Alpha-D-Glucose-1,6-Bisphosphate, subunit A, domain 3"/>
    <property type="match status" value="3"/>
</dbReference>
<dbReference type="Gene3D" id="3.30.310.50">
    <property type="entry name" value="Alpha-D-phosphohexomutase, C-terminal domain"/>
    <property type="match status" value="1"/>
</dbReference>
<dbReference type="InterPro" id="IPR005844">
    <property type="entry name" value="A-D-PHexomutase_a/b/a-I"/>
</dbReference>
<dbReference type="InterPro" id="IPR016055">
    <property type="entry name" value="A-D-PHexomutase_a/b/a-I/II/III"/>
</dbReference>
<dbReference type="InterPro" id="IPR005845">
    <property type="entry name" value="A-D-PHexomutase_a/b/a-II"/>
</dbReference>
<dbReference type="InterPro" id="IPR005846">
    <property type="entry name" value="A-D-PHexomutase_a/b/a-III"/>
</dbReference>
<dbReference type="InterPro" id="IPR005843">
    <property type="entry name" value="A-D-PHexomutase_C"/>
</dbReference>
<dbReference type="InterPro" id="IPR036900">
    <property type="entry name" value="A-D-PHexomutase_C_sf"/>
</dbReference>
<dbReference type="InterPro" id="IPR016066">
    <property type="entry name" value="A-D-PHexomutase_CS"/>
</dbReference>
<dbReference type="InterPro" id="IPR005841">
    <property type="entry name" value="Alpha-D-phosphohexomutase_SF"/>
</dbReference>
<dbReference type="PANTHER" id="PTHR43771">
    <property type="entry name" value="PHOSPHOMANNOMUTASE"/>
    <property type="match status" value="1"/>
</dbReference>
<dbReference type="PANTHER" id="PTHR43771:SF1">
    <property type="entry name" value="PHOSPHOMANNOMUTASE"/>
    <property type="match status" value="1"/>
</dbReference>
<dbReference type="Pfam" id="PF02878">
    <property type="entry name" value="PGM_PMM_I"/>
    <property type="match status" value="1"/>
</dbReference>
<dbReference type="Pfam" id="PF02879">
    <property type="entry name" value="PGM_PMM_II"/>
    <property type="match status" value="1"/>
</dbReference>
<dbReference type="Pfam" id="PF02880">
    <property type="entry name" value="PGM_PMM_III"/>
    <property type="match status" value="1"/>
</dbReference>
<dbReference type="Pfam" id="PF00408">
    <property type="entry name" value="PGM_PMM_IV"/>
    <property type="match status" value="1"/>
</dbReference>
<dbReference type="PRINTS" id="PR00509">
    <property type="entry name" value="PGMPMM"/>
</dbReference>
<dbReference type="SUPFAM" id="SSF55957">
    <property type="entry name" value="Phosphoglucomutase, C-terminal domain"/>
    <property type="match status" value="1"/>
</dbReference>
<dbReference type="SUPFAM" id="SSF53738">
    <property type="entry name" value="Phosphoglucomutase, first 3 domains"/>
    <property type="match status" value="3"/>
</dbReference>
<dbReference type="PROSITE" id="PS00710">
    <property type="entry name" value="PGM_PMM"/>
    <property type="match status" value="1"/>
</dbReference>
<proteinExistence type="inferred from homology"/>
<evidence type="ECO:0000250" key="1"/>
<evidence type="ECO:0000305" key="2"/>
<sequence>MKELTCFKAYDIRGQLGSELDNEIAYRIGRSYGQFLKSENDADKTVVVGGDVRLTSEALKQALANGLMDAGINVIDIGVTGTEEIYFATFYLGVDGGIEVTASHNPMDYNGMKLVREGSKPISGDTGLREIQALAEKNEFMDVEVKGNYKKVSLLPEYVDHLISYITPAKIKPMKLVINSGNGAAGHVIDELEKRFIELSIPLEIIKVHHEEDGNFPNGIPNPLLPECRADTANAVKEHKADMGIAFDGDFDRCFLFDENGDFIEGYYIVGLLAEAFLQKEQGAKIIHDPRLSWNTIDVVTKSGGVPVMSKTGHAFIKERMRKEDAIYGGEMSAHHYFRDFGYCDSGMIPWLLITELLSLAPDISLSKLISAKRFLFPCSGEINFKVKQAKLIMEQVYLHYYENSIHFSAIDGISLEFEGWRFNLRDSNTEPLLRLNVESKQNIALMNDKVEELTKLIKKLDI</sequence>
<gene>
    <name type="primary">rfbB</name>
    <name type="ordered locus">VC_0242</name>
</gene>
<feature type="chain" id="PRO_0000147827" description="Phosphomannomutase">
    <location>
        <begin position="1"/>
        <end position="463"/>
    </location>
</feature>
<feature type="active site" description="Phosphoserine intermediate" evidence="1">
    <location>
        <position position="103"/>
    </location>
</feature>
<feature type="binding site" description="via phosphate group" evidence="1">
    <location>
        <position position="103"/>
    </location>
    <ligand>
        <name>Mg(2+)</name>
        <dbReference type="ChEBI" id="CHEBI:18420"/>
    </ligand>
</feature>
<feature type="binding site" evidence="1">
    <location>
        <position position="248"/>
    </location>
    <ligand>
        <name>Mg(2+)</name>
        <dbReference type="ChEBI" id="CHEBI:18420"/>
    </ligand>
</feature>
<feature type="binding site" evidence="1">
    <location>
        <position position="250"/>
    </location>
    <ligand>
        <name>Mg(2+)</name>
        <dbReference type="ChEBI" id="CHEBI:18420"/>
    </ligand>
</feature>
<feature type="binding site" evidence="1">
    <location>
        <position position="252"/>
    </location>
    <ligand>
        <name>Mg(2+)</name>
        <dbReference type="ChEBI" id="CHEBI:18420"/>
    </ligand>
</feature>
<accession>Q06951</accession>
<accession>Q9JQ14</accession>
<keyword id="KW-1003">Cell membrane</keyword>
<keyword id="KW-0413">Isomerase</keyword>
<keyword id="KW-0448">Lipopolysaccharide biosynthesis</keyword>
<keyword id="KW-0460">Magnesium</keyword>
<keyword id="KW-0472">Membrane</keyword>
<keyword id="KW-0479">Metal-binding</keyword>
<keyword id="KW-0597">Phosphoprotein</keyword>
<keyword id="KW-1185">Reference proteome</keyword>